<accession>B2HP18</accession>
<feature type="chain" id="PRO_1000124001" description="Pyrrolidone-carboxylate peptidase">
    <location>
        <begin position="1"/>
        <end position="222"/>
    </location>
</feature>
<feature type="active site" evidence="1">
    <location>
        <position position="80"/>
    </location>
</feature>
<feature type="active site" evidence="1">
    <location>
        <position position="146"/>
    </location>
</feature>
<feature type="active site" evidence="1">
    <location>
        <position position="170"/>
    </location>
</feature>
<name>PCP_MYCMM</name>
<keyword id="KW-0963">Cytoplasm</keyword>
<keyword id="KW-0378">Hydrolase</keyword>
<keyword id="KW-0645">Protease</keyword>
<keyword id="KW-1185">Reference proteome</keyword>
<keyword id="KW-0788">Thiol protease</keyword>
<organism>
    <name type="scientific">Mycobacterium marinum (strain ATCC BAA-535 / M)</name>
    <dbReference type="NCBI Taxonomy" id="216594"/>
    <lineage>
        <taxon>Bacteria</taxon>
        <taxon>Bacillati</taxon>
        <taxon>Actinomycetota</taxon>
        <taxon>Actinomycetes</taxon>
        <taxon>Mycobacteriales</taxon>
        <taxon>Mycobacteriaceae</taxon>
        <taxon>Mycobacterium</taxon>
        <taxon>Mycobacterium ulcerans group</taxon>
    </lineage>
</organism>
<gene>
    <name evidence="1" type="primary">pcp</name>
    <name type="ordered locus">MMAR_0598</name>
</gene>
<comment type="function">
    <text evidence="1">Removes 5-oxoproline from various penultimate amino acid residues except L-proline.</text>
</comment>
<comment type="catalytic activity">
    <reaction evidence="1">
        <text>Release of an N-terminal pyroglutamyl group from a polypeptide, the second amino acid generally not being Pro.</text>
        <dbReference type="EC" id="3.4.19.3"/>
    </reaction>
</comment>
<comment type="subunit">
    <text evidence="1">Homotetramer.</text>
</comment>
<comment type="subcellular location">
    <subcellularLocation>
        <location evidence="1">Cytoplasm</location>
    </subcellularLocation>
</comment>
<comment type="similarity">
    <text evidence="1">Belongs to the peptidase C15 family.</text>
</comment>
<proteinExistence type="inferred from homology"/>
<reference key="1">
    <citation type="journal article" date="2008" name="Genome Res.">
        <title>Insights from the complete genome sequence of Mycobacterium marinum on the evolution of Mycobacterium tuberculosis.</title>
        <authorList>
            <person name="Stinear T.P."/>
            <person name="Seemann T."/>
            <person name="Harrison P.F."/>
            <person name="Jenkin G.A."/>
            <person name="Davies J.K."/>
            <person name="Johnson P.D."/>
            <person name="Abdellah Z."/>
            <person name="Arrowsmith C."/>
            <person name="Chillingworth T."/>
            <person name="Churcher C."/>
            <person name="Clarke K."/>
            <person name="Cronin A."/>
            <person name="Davis P."/>
            <person name="Goodhead I."/>
            <person name="Holroyd N."/>
            <person name="Jagels K."/>
            <person name="Lord A."/>
            <person name="Moule S."/>
            <person name="Mungall K."/>
            <person name="Norbertczak H."/>
            <person name="Quail M.A."/>
            <person name="Rabbinowitsch E."/>
            <person name="Walker D."/>
            <person name="White B."/>
            <person name="Whitehead S."/>
            <person name="Small P.L."/>
            <person name="Brosch R."/>
            <person name="Ramakrishnan L."/>
            <person name="Fischbach M.A."/>
            <person name="Parkhill J."/>
            <person name="Cole S.T."/>
        </authorList>
    </citation>
    <scope>NUCLEOTIDE SEQUENCE [LARGE SCALE GENOMIC DNA]</scope>
    <source>
        <strain>ATCC BAA-535 / M</strain>
    </source>
</reference>
<sequence length="222" mass="23185">MTKVLVTGFGPYGVTPDNPAQFTAEALDGRTIAGATVVSRIVPGAYFDSIAAAEQAIAEVDPQLVIMLGEYPGRAMLTVERLAQNINDCGRYGLADTAGKVLVGEPTDPDGPVAYHATVPVHEMVLAMRAAGIPADVSDAAGTFVCNHLMYGVLHHIATQNLPIRAGWVHLPCLPMVAALDRNLGVPSMSVETAVAGLVAGIEAAVQHSADTREPVPSRLQI</sequence>
<protein>
    <recommendedName>
        <fullName evidence="1">Pyrrolidone-carboxylate peptidase</fullName>
        <ecNumber evidence="1">3.4.19.3</ecNumber>
    </recommendedName>
    <alternativeName>
        <fullName evidence="1">5-oxoprolyl-peptidase</fullName>
    </alternativeName>
    <alternativeName>
        <fullName evidence="1">Pyroglutamyl-peptidase I</fullName>
        <shortName evidence="1">PGP-I</shortName>
        <shortName evidence="1">Pyrase</shortName>
    </alternativeName>
</protein>
<dbReference type="EC" id="3.4.19.3" evidence="1"/>
<dbReference type="EMBL" id="CP000854">
    <property type="protein sequence ID" value="ACC39060.1"/>
    <property type="molecule type" value="Genomic_DNA"/>
</dbReference>
<dbReference type="RefSeq" id="WP_012392559.1">
    <property type="nucleotide sequence ID" value="NC_010612.1"/>
</dbReference>
<dbReference type="SMR" id="B2HP18"/>
<dbReference type="STRING" id="216594.MMAR_0598"/>
<dbReference type="MEROPS" id="C15.001"/>
<dbReference type="GeneID" id="34341815"/>
<dbReference type="KEGG" id="mmi:MMAR_0598"/>
<dbReference type="eggNOG" id="COG2039">
    <property type="taxonomic scope" value="Bacteria"/>
</dbReference>
<dbReference type="HOGENOM" id="CLU_043960_4_3_11"/>
<dbReference type="OrthoDB" id="9779738at2"/>
<dbReference type="Proteomes" id="UP000001190">
    <property type="component" value="Chromosome"/>
</dbReference>
<dbReference type="GO" id="GO:0005829">
    <property type="term" value="C:cytosol"/>
    <property type="evidence" value="ECO:0007669"/>
    <property type="project" value="InterPro"/>
</dbReference>
<dbReference type="GO" id="GO:0016920">
    <property type="term" value="F:pyroglutamyl-peptidase activity"/>
    <property type="evidence" value="ECO:0007669"/>
    <property type="project" value="UniProtKB-UniRule"/>
</dbReference>
<dbReference type="GO" id="GO:0006508">
    <property type="term" value="P:proteolysis"/>
    <property type="evidence" value="ECO:0007669"/>
    <property type="project" value="UniProtKB-KW"/>
</dbReference>
<dbReference type="CDD" id="cd00501">
    <property type="entry name" value="Peptidase_C15"/>
    <property type="match status" value="1"/>
</dbReference>
<dbReference type="Gene3D" id="3.40.630.20">
    <property type="entry name" value="Peptidase C15, pyroglutamyl peptidase I-like"/>
    <property type="match status" value="1"/>
</dbReference>
<dbReference type="HAMAP" id="MF_00417">
    <property type="entry name" value="Pyrrolid_peptidase"/>
    <property type="match status" value="1"/>
</dbReference>
<dbReference type="InterPro" id="IPR000816">
    <property type="entry name" value="Peptidase_C15"/>
</dbReference>
<dbReference type="InterPro" id="IPR016125">
    <property type="entry name" value="Peptidase_C15-like"/>
</dbReference>
<dbReference type="InterPro" id="IPR036440">
    <property type="entry name" value="Peptidase_C15-like_sf"/>
</dbReference>
<dbReference type="InterPro" id="IPR029762">
    <property type="entry name" value="PGP-I_bact-type"/>
</dbReference>
<dbReference type="InterPro" id="IPR033694">
    <property type="entry name" value="PGPEP1_Cys_AS"/>
</dbReference>
<dbReference type="InterPro" id="IPR033693">
    <property type="entry name" value="PGPEP1_Glu_AS"/>
</dbReference>
<dbReference type="NCBIfam" id="NF009674">
    <property type="entry name" value="PRK13195.1"/>
    <property type="match status" value="1"/>
</dbReference>
<dbReference type="NCBIfam" id="TIGR00504">
    <property type="entry name" value="pyro_pdase"/>
    <property type="match status" value="1"/>
</dbReference>
<dbReference type="PANTHER" id="PTHR23402">
    <property type="entry name" value="PROTEASE FAMILY C15 PYROGLUTAMYL-PEPTIDASE I-RELATED"/>
    <property type="match status" value="1"/>
</dbReference>
<dbReference type="PANTHER" id="PTHR23402:SF1">
    <property type="entry name" value="PYROGLUTAMYL-PEPTIDASE I"/>
    <property type="match status" value="1"/>
</dbReference>
<dbReference type="Pfam" id="PF01470">
    <property type="entry name" value="Peptidase_C15"/>
    <property type="match status" value="1"/>
</dbReference>
<dbReference type="PIRSF" id="PIRSF015592">
    <property type="entry name" value="Prld-crbxl_pptds"/>
    <property type="match status" value="1"/>
</dbReference>
<dbReference type="PRINTS" id="PR00706">
    <property type="entry name" value="PYROGLUPTASE"/>
</dbReference>
<dbReference type="SUPFAM" id="SSF53182">
    <property type="entry name" value="Pyrrolidone carboxyl peptidase (pyroglutamate aminopeptidase)"/>
    <property type="match status" value="1"/>
</dbReference>
<dbReference type="PROSITE" id="PS01334">
    <property type="entry name" value="PYRASE_CYS"/>
    <property type="match status" value="1"/>
</dbReference>
<dbReference type="PROSITE" id="PS01333">
    <property type="entry name" value="PYRASE_GLU"/>
    <property type="match status" value="1"/>
</dbReference>
<evidence type="ECO:0000255" key="1">
    <source>
        <dbReference type="HAMAP-Rule" id="MF_00417"/>
    </source>
</evidence>